<protein>
    <recommendedName>
        <fullName>Unknown protein from spot 245 of 2D-PAGE of etiolated coleoptile</fullName>
    </recommendedName>
</protein>
<sequence length="14" mass="1396">VSTLLPVVAAEEPA</sequence>
<dbReference type="MaizeGDB" id="123947"/>
<dbReference type="InParanoid" id="P80621"/>
<dbReference type="Proteomes" id="UP000007305">
    <property type="component" value="Unplaced"/>
</dbReference>
<proteinExistence type="evidence at protein level"/>
<comment type="miscellaneous">
    <text>On the 2D-gel the determined pI of this unknown protein is: 4.8, its MW is: 35.7 kDa.</text>
</comment>
<accession>P80621</accession>
<organism>
    <name type="scientific">Zea mays</name>
    <name type="common">Maize</name>
    <dbReference type="NCBI Taxonomy" id="4577"/>
    <lineage>
        <taxon>Eukaryota</taxon>
        <taxon>Viridiplantae</taxon>
        <taxon>Streptophyta</taxon>
        <taxon>Embryophyta</taxon>
        <taxon>Tracheophyta</taxon>
        <taxon>Spermatophyta</taxon>
        <taxon>Magnoliopsida</taxon>
        <taxon>Liliopsida</taxon>
        <taxon>Poales</taxon>
        <taxon>Poaceae</taxon>
        <taxon>PACMAD clade</taxon>
        <taxon>Panicoideae</taxon>
        <taxon>Andropogonodae</taxon>
        <taxon>Andropogoneae</taxon>
        <taxon>Tripsacinae</taxon>
        <taxon>Zea</taxon>
    </lineage>
</organism>
<feature type="chain" id="PRO_0000055511" description="Unknown protein from spot 245 of 2D-PAGE of etiolated coleoptile">
    <location>
        <begin position="1" status="less than"/>
        <end position="14" status="greater than"/>
    </location>
</feature>
<feature type="non-terminal residue">
    <location>
        <position position="1"/>
    </location>
</feature>
<feature type="non-terminal residue">
    <location>
        <position position="14"/>
    </location>
</feature>
<keyword id="KW-0903">Direct protein sequencing</keyword>
<keyword id="KW-1185">Reference proteome</keyword>
<reference key="1">
    <citation type="journal article" date="1996" name="Theor. Appl. Genet.">
        <title>The maize two dimensional gel protein database: towards an integrated genome analysis program.</title>
        <authorList>
            <person name="Touzet P."/>
            <person name="Riccardi F."/>
            <person name="Morin C."/>
            <person name="Damerval C."/>
            <person name="Huet J.-C."/>
            <person name="Pernollet J.-C."/>
            <person name="Zivy M."/>
            <person name="de Vienne D."/>
        </authorList>
        <dbReference type="AGRICOLA" id="IND20551642"/>
    </citation>
    <scope>PROTEIN SEQUENCE</scope>
    <source>
        <tissue>Coleoptile</tissue>
    </source>
</reference>
<name>UC15_MAIZE</name>